<dbReference type="EC" id="4.98.1.1" evidence="1"/>
<dbReference type="EMBL" id="CP001043">
    <property type="protein sequence ID" value="ACC71675.1"/>
    <property type="molecule type" value="Genomic_DNA"/>
</dbReference>
<dbReference type="RefSeq" id="WP_012401879.1">
    <property type="nucleotide sequence ID" value="NC_010622.1"/>
</dbReference>
<dbReference type="SMR" id="B2JGE7"/>
<dbReference type="STRING" id="391038.Bphy_2502"/>
<dbReference type="KEGG" id="bph:Bphy_2502"/>
<dbReference type="eggNOG" id="COG0276">
    <property type="taxonomic scope" value="Bacteria"/>
</dbReference>
<dbReference type="HOGENOM" id="CLU_018884_0_0_4"/>
<dbReference type="OrthoDB" id="9809741at2"/>
<dbReference type="UniPathway" id="UPA00252">
    <property type="reaction ID" value="UER00325"/>
</dbReference>
<dbReference type="Proteomes" id="UP000001192">
    <property type="component" value="Chromosome 1"/>
</dbReference>
<dbReference type="GO" id="GO:0005737">
    <property type="term" value="C:cytoplasm"/>
    <property type="evidence" value="ECO:0007669"/>
    <property type="project" value="UniProtKB-SubCell"/>
</dbReference>
<dbReference type="GO" id="GO:0004325">
    <property type="term" value="F:ferrochelatase activity"/>
    <property type="evidence" value="ECO:0007669"/>
    <property type="project" value="UniProtKB-UniRule"/>
</dbReference>
<dbReference type="GO" id="GO:0046872">
    <property type="term" value="F:metal ion binding"/>
    <property type="evidence" value="ECO:0007669"/>
    <property type="project" value="UniProtKB-KW"/>
</dbReference>
<dbReference type="GO" id="GO:0006783">
    <property type="term" value="P:heme biosynthetic process"/>
    <property type="evidence" value="ECO:0007669"/>
    <property type="project" value="UniProtKB-UniRule"/>
</dbReference>
<dbReference type="CDD" id="cd00419">
    <property type="entry name" value="Ferrochelatase_C"/>
    <property type="match status" value="1"/>
</dbReference>
<dbReference type="CDD" id="cd03411">
    <property type="entry name" value="Ferrochelatase_N"/>
    <property type="match status" value="1"/>
</dbReference>
<dbReference type="FunFam" id="3.40.50.1400:FF:000002">
    <property type="entry name" value="Ferrochelatase"/>
    <property type="match status" value="1"/>
</dbReference>
<dbReference type="Gene3D" id="3.40.50.1400">
    <property type="match status" value="2"/>
</dbReference>
<dbReference type="HAMAP" id="MF_00323">
    <property type="entry name" value="Ferrochelatase"/>
    <property type="match status" value="1"/>
</dbReference>
<dbReference type="InterPro" id="IPR001015">
    <property type="entry name" value="Ferrochelatase"/>
</dbReference>
<dbReference type="InterPro" id="IPR019772">
    <property type="entry name" value="Ferrochelatase_AS"/>
</dbReference>
<dbReference type="InterPro" id="IPR033644">
    <property type="entry name" value="Ferrochelatase_C"/>
</dbReference>
<dbReference type="InterPro" id="IPR033659">
    <property type="entry name" value="Ferrochelatase_N"/>
</dbReference>
<dbReference type="NCBIfam" id="TIGR00109">
    <property type="entry name" value="hemH"/>
    <property type="match status" value="1"/>
</dbReference>
<dbReference type="PANTHER" id="PTHR11108">
    <property type="entry name" value="FERROCHELATASE"/>
    <property type="match status" value="1"/>
</dbReference>
<dbReference type="PANTHER" id="PTHR11108:SF1">
    <property type="entry name" value="FERROCHELATASE, MITOCHONDRIAL"/>
    <property type="match status" value="1"/>
</dbReference>
<dbReference type="Pfam" id="PF00762">
    <property type="entry name" value="Ferrochelatase"/>
    <property type="match status" value="1"/>
</dbReference>
<dbReference type="SUPFAM" id="SSF53800">
    <property type="entry name" value="Chelatase"/>
    <property type="match status" value="1"/>
</dbReference>
<dbReference type="PROSITE" id="PS00534">
    <property type="entry name" value="FERROCHELATASE"/>
    <property type="match status" value="1"/>
</dbReference>
<comment type="function">
    <text evidence="1">Catalyzes the ferrous insertion into protoporphyrin IX.</text>
</comment>
<comment type="catalytic activity">
    <reaction evidence="1">
        <text>heme b + 2 H(+) = protoporphyrin IX + Fe(2+)</text>
        <dbReference type="Rhea" id="RHEA:22584"/>
        <dbReference type="ChEBI" id="CHEBI:15378"/>
        <dbReference type="ChEBI" id="CHEBI:29033"/>
        <dbReference type="ChEBI" id="CHEBI:57306"/>
        <dbReference type="ChEBI" id="CHEBI:60344"/>
        <dbReference type="EC" id="4.98.1.1"/>
    </reaction>
</comment>
<comment type="pathway">
    <text evidence="1">Porphyrin-containing compound metabolism; protoheme biosynthesis; protoheme from protoporphyrin-IX: step 1/1.</text>
</comment>
<comment type="subcellular location">
    <subcellularLocation>
        <location evidence="1">Cytoplasm</location>
    </subcellularLocation>
</comment>
<comment type="similarity">
    <text evidence="1">Belongs to the ferrochelatase family.</text>
</comment>
<feature type="chain" id="PRO_1000116034" description="Ferrochelatase">
    <location>
        <begin position="1"/>
        <end position="356"/>
    </location>
</feature>
<feature type="binding site" evidence="1">
    <location>
        <position position="214"/>
    </location>
    <ligand>
        <name>Fe cation</name>
        <dbReference type="ChEBI" id="CHEBI:24875"/>
    </ligand>
</feature>
<feature type="binding site" evidence="1">
    <location>
        <position position="295"/>
    </location>
    <ligand>
        <name>Fe cation</name>
        <dbReference type="ChEBI" id="CHEBI:24875"/>
    </ligand>
</feature>
<gene>
    <name evidence="1" type="primary">hemH</name>
    <name type="ordered locus">Bphy_2502</name>
</gene>
<organism>
    <name type="scientific">Paraburkholderia phymatum (strain DSM 17167 / CIP 108236 / LMG 21445 / STM815)</name>
    <name type="common">Burkholderia phymatum</name>
    <dbReference type="NCBI Taxonomy" id="391038"/>
    <lineage>
        <taxon>Bacteria</taxon>
        <taxon>Pseudomonadati</taxon>
        <taxon>Pseudomonadota</taxon>
        <taxon>Betaproteobacteria</taxon>
        <taxon>Burkholderiales</taxon>
        <taxon>Burkholderiaceae</taxon>
        <taxon>Paraburkholderia</taxon>
    </lineage>
</organism>
<evidence type="ECO:0000255" key="1">
    <source>
        <dbReference type="HAMAP-Rule" id="MF_00323"/>
    </source>
</evidence>
<reference key="1">
    <citation type="journal article" date="2014" name="Stand. Genomic Sci.">
        <title>Complete genome sequence of Burkholderia phymatum STM815(T), a broad host range and efficient nitrogen-fixing symbiont of Mimosa species.</title>
        <authorList>
            <person name="Moulin L."/>
            <person name="Klonowska A."/>
            <person name="Caroline B."/>
            <person name="Booth K."/>
            <person name="Vriezen J.A."/>
            <person name="Melkonian R."/>
            <person name="James E.K."/>
            <person name="Young J.P."/>
            <person name="Bena G."/>
            <person name="Hauser L."/>
            <person name="Land M."/>
            <person name="Kyrpides N."/>
            <person name="Bruce D."/>
            <person name="Chain P."/>
            <person name="Copeland A."/>
            <person name="Pitluck S."/>
            <person name="Woyke T."/>
            <person name="Lizotte-Waniewski M."/>
            <person name="Bristow J."/>
            <person name="Riley M."/>
        </authorList>
    </citation>
    <scope>NUCLEOTIDE SEQUENCE [LARGE SCALE GENOMIC DNA]</scope>
    <source>
        <strain>DSM 17167 / CIP 108236 / LMG 21445 / STM815</strain>
    </source>
</reference>
<keyword id="KW-0963">Cytoplasm</keyword>
<keyword id="KW-0350">Heme biosynthesis</keyword>
<keyword id="KW-0408">Iron</keyword>
<keyword id="KW-0456">Lyase</keyword>
<keyword id="KW-0479">Metal-binding</keyword>
<keyword id="KW-0627">Porphyrin biosynthesis</keyword>
<keyword id="KW-1185">Reference proteome</keyword>
<proteinExistence type="inferred from homology"/>
<sequence>MRFDLERPLQSAAAHRVAVLLINLGTPDAPTPRAVRRYLAQFLSDPRVVEIPSLVWQIILRLFILPFRGVASAKKYASVWMPEGSPLRVHTQKQVEGLRHLLHLNDYTVIVEYAMRYGTPDIPAMLNQLKLAGAERILLMPMYPQYSASTTATAFDAAFVALRRMRNQPEIRTVRQYADHPAYIAALAAQVNHYWHAHGRPDFAAGDKLVLSFHGVPKRTLDLGDPYHDQCQQTATLLMHALGLTSVECRVTFQSRFGKAEWLQPYTAPTLKELGAAGVHRADVFCPGFTADCLETIEEIGMEVRDEFLHAGGKVFHAIPCLNAAPAWIAALGEIVAQHLQGWPVQAATPQSASVA</sequence>
<accession>B2JGE7</accession>
<protein>
    <recommendedName>
        <fullName evidence="1">Ferrochelatase</fullName>
        <ecNumber evidence="1">4.98.1.1</ecNumber>
    </recommendedName>
    <alternativeName>
        <fullName evidence="1">Heme synthase</fullName>
    </alternativeName>
    <alternativeName>
        <fullName evidence="1">Protoheme ferro-lyase</fullName>
    </alternativeName>
</protein>
<name>HEMH_PARP8</name>